<protein>
    <recommendedName>
        <fullName>Uncharacterized protein Mb2296</fullName>
    </recommendedName>
</protein>
<dbReference type="EMBL" id="LT708304">
    <property type="protein sequence ID" value="SIU00907.1"/>
    <property type="molecule type" value="Genomic_DNA"/>
</dbReference>
<dbReference type="RefSeq" id="NP_855945.1">
    <property type="nucleotide sequence ID" value="NC_002945.3"/>
</dbReference>
<dbReference type="RefSeq" id="WP_003411678.1">
    <property type="nucleotide sequence ID" value="NC_002945.4"/>
</dbReference>
<dbReference type="SMR" id="P64972"/>
<dbReference type="KEGG" id="mbo:BQ2027_MB2296"/>
<dbReference type="PATRIC" id="fig|233413.5.peg.2521"/>
<dbReference type="Proteomes" id="UP000001419">
    <property type="component" value="Chromosome"/>
</dbReference>
<dbReference type="GO" id="GO:0005886">
    <property type="term" value="C:plasma membrane"/>
    <property type="evidence" value="ECO:0007669"/>
    <property type="project" value="UniProtKB-SubCell"/>
</dbReference>
<dbReference type="InterPro" id="IPR003807">
    <property type="entry name" value="DUF202"/>
</dbReference>
<dbReference type="Pfam" id="PF02656">
    <property type="entry name" value="DUF202"/>
    <property type="match status" value="1"/>
</dbReference>
<organism>
    <name type="scientific">Mycobacterium bovis (strain ATCC BAA-935 / AF2122/97)</name>
    <dbReference type="NCBI Taxonomy" id="233413"/>
    <lineage>
        <taxon>Bacteria</taxon>
        <taxon>Bacillati</taxon>
        <taxon>Actinomycetota</taxon>
        <taxon>Actinomycetes</taxon>
        <taxon>Mycobacteriales</taxon>
        <taxon>Mycobacteriaceae</taxon>
        <taxon>Mycobacterium</taxon>
        <taxon>Mycobacterium tuberculosis complex</taxon>
    </lineage>
</organism>
<comment type="subcellular location">
    <subcellularLocation>
        <location evidence="2">Cell membrane</location>
        <topology evidence="2">Multi-pass membrane protein</topology>
    </subcellularLocation>
</comment>
<keyword id="KW-1003">Cell membrane</keyword>
<keyword id="KW-0472">Membrane</keyword>
<keyword id="KW-1185">Reference proteome</keyword>
<keyword id="KW-0812">Transmembrane</keyword>
<keyword id="KW-1133">Transmembrane helix</keyword>
<sequence>MNRHSTAASDRGLQAERTTLAWTRTAFALLVNGVLLTLKDTQGADGPAGLIPAGLAGAAASCCYVIALQRQRALSHRPLPARITPRGQVHILATAVLVLMVVTAFAQLL</sequence>
<feature type="chain" id="PRO_0000104002" description="Uncharacterized protein Mb2296">
    <location>
        <begin position="1"/>
        <end position="109"/>
    </location>
</feature>
<feature type="transmembrane region" description="Helical" evidence="1">
    <location>
        <begin position="18"/>
        <end position="38"/>
    </location>
</feature>
<feature type="transmembrane region" description="Helical" evidence="1">
    <location>
        <begin position="48"/>
        <end position="68"/>
    </location>
</feature>
<reference key="1">
    <citation type="journal article" date="2003" name="Proc. Natl. Acad. Sci. U.S.A.">
        <title>The complete genome sequence of Mycobacterium bovis.</title>
        <authorList>
            <person name="Garnier T."/>
            <person name="Eiglmeier K."/>
            <person name="Camus J.-C."/>
            <person name="Medina N."/>
            <person name="Mansoor H."/>
            <person name="Pryor M."/>
            <person name="Duthoy S."/>
            <person name="Grondin S."/>
            <person name="Lacroix C."/>
            <person name="Monsempe C."/>
            <person name="Simon S."/>
            <person name="Harris B."/>
            <person name="Atkin R."/>
            <person name="Doggett J."/>
            <person name="Mayes R."/>
            <person name="Keating L."/>
            <person name="Wheeler P.R."/>
            <person name="Parkhill J."/>
            <person name="Barrell B.G."/>
            <person name="Cole S.T."/>
            <person name="Gordon S.V."/>
            <person name="Hewinson R.G."/>
        </authorList>
    </citation>
    <scope>NUCLEOTIDE SEQUENCE [LARGE SCALE GENOMIC DNA]</scope>
    <source>
        <strain>ATCC BAA-935 / AF2122/97</strain>
    </source>
</reference>
<reference key="2">
    <citation type="journal article" date="2017" name="Genome Announc.">
        <title>Updated reference genome sequence and annotation of Mycobacterium bovis AF2122/97.</title>
        <authorList>
            <person name="Malone K.M."/>
            <person name="Farrell D."/>
            <person name="Stuber T.P."/>
            <person name="Schubert O.T."/>
            <person name="Aebersold R."/>
            <person name="Robbe-Austerman S."/>
            <person name="Gordon S.V."/>
        </authorList>
    </citation>
    <scope>NUCLEOTIDE SEQUENCE [LARGE SCALE GENOMIC DNA]</scope>
    <scope>GENOME REANNOTATION</scope>
    <source>
        <strain>ATCC BAA-935 / AF2122/97</strain>
    </source>
</reference>
<evidence type="ECO:0000255" key="1"/>
<evidence type="ECO:0000305" key="2"/>
<name>Y2296_MYCBO</name>
<proteinExistence type="predicted"/>
<accession>P64972</accession>
<accession>A0A1R3Y133</accession>
<accession>Q50690</accession>
<accession>X2BKM3</accession>
<gene>
    <name type="ordered locus">BQ2027_MB2296</name>
</gene>